<gene>
    <name evidence="1" type="primary">rpsB</name>
    <name type="ordered locus">CCA_00046</name>
</gene>
<sequence length="276" mass="30959">MEEQPLCTLSVKDLMEAGAHFGHQTRRWNPKMKLYIFEEKNGLYIINLAKTLYQLRNALPHVCKVIKENKPILFVGTKKQAKCVIKEAAIEAGEYFVAERWLGGMLTNMATIRNSIKTLDKIEKDLTQNSSCLTKKEIALLAKRHQKLLKNLEGIRYLRKIPGLVIVVDPSYEKIAVAEAKKLGIPVLALVDTNCDPTPIDYVVPCNDDSLKSIRLIISAIKDNIINTKKKLGVEIVSPIKTLSTEDGSEEIDIAAGDDNRKEDLLAKKYDSNEAN</sequence>
<keyword id="KW-0687">Ribonucleoprotein</keyword>
<keyword id="KW-0689">Ribosomal protein</keyword>
<protein>
    <recommendedName>
        <fullName evidence="1">Small ribosomal subunit protein uS2</fullName>
    </recommendedName>
    <alternativeName>
        <fullName evidence="2">30S ribosomal protein S2</fullName>
    </alternativeName>
</protein>
<organism>
    <name type="scientific">Chlamydia caviae (strain ATCC VR-813 / DSM 19441 / 03DC25 / GPIC)</name>
    <name type="common">Chlamydophila caviae</name>
    <dbReference type="NCBI Taxonomy" id="227941"/>
    <lineage>
        <taxon>Bacteria</taxon>
        <taxon>Pseudomonadati</taxon>
        <taxon>Chlamydiota</taxon>
        <taxon>Chlamydiia</taxon>
        <taxon>Chlamydiales</taxon>
        <taxon>Chlamydiaceae</taxon>
        <taxon>Chlamydia/Chlamydophila group</taxon>
        <taxon>Chlamydia</taxon>
    </lineage>
</organism>
<accession>Q824U3</accession>
<feature type="chain" id="PRO_0000134150" description="Small ribosomal subunit protein uS2">
    <location>
        <begin position="1"/>
        <end position="276"/>
    </location>
</feature>
<evidence type="ECO:0000255" key="1">
    <source>
        <dbReference type="HAMAP-Rule" id="MF_00291"/>
    </source>
</evidence>
<evidence type="ECO:0000305" key="2"/>
<reference key="1">
    <citation type="journal article" date="2003" name="Nucleic Acids Res.">
        <title>Genome sequence of Chlamydophila caviae (Chlamydia psittaci GPIC): examining the role of niche-specific genes in the evolution of the Chlamydiaceae.</title>
        <authorList>
            <person name="Read T.D."/>
            <person name="Myers G.S.A."/>
            <person name="Brunham R.C."/>
            <person name="Nelson W.C."/>
            <person name="Paulsen I.T."/>
            <person name="Heidelberg J.F."/>
            <person name="Holtzapple E.K."/>
            <person name="Khouri H.M."/>
            <person name="Federova N.B."/>
            <person name="Carty H.A."/>
            <person name="Umayam L.A."/>
            <person name="Haft D.H."/>
            <person name="Peterson J.D."/>
            <person name="Beanan M.J."/>
            <person name="White O."/>
            <person name="Salzberg S.L."/>
            <person name="Hsia R.-C."/>
            <person name="McClarty G."/>
            <person name="Rank R.G."/>
            <person name="Bavoil P.M."/>
            <person name="Fraser C.M."/>
        </authorList>
    </citation>
    <scope>NUCLEOTIDE SEQUENCE [LARGE SCALE GENOMIC DNA]</scope>
    <source>
        <strain>ATCC VR-813 / DSM 19441 / 03DC25 / GPIC</strain>
    </source>
</reference>
<comment type="similarity">
    <text evidence="1">Belongs to the universal ribosomal protein uS2 family.</text>
</comment>
<dbReference type="EMBL" id="AE015925">
    <property type="protein sequence ID" value="AAP04798.1"/>
    <property type="molecule type" value="Genomic_DNA"/>
</dbReference>
<dbReference type="RefSeq" id="WP_011006019.1">
    <property type="nucleotide sequence ID" value="NC_003361.3"/>
</dbReference>
<dbReference type="SMR" id="Q824U3"/>
<dbReference type="STRING" id="227941.CCA_00046"/>
<dbReference type="KEGG" id="cca:CCA_00046"/>
<dbReference type="eggNOG" id="COG0052">
    <property type="taxonomic scope" value="Bacteria"/>
</dbReference>
<dbReference type="HOGENOM" id="CLU_040318_1_2_0"/>
<dbReference type="OrthoDB" id="9808036at2"/>
<dbReference type="Proteomes" id="UP000002193">
    <property type="component" value="Chromosome"/>
</dbReference>
<dbReference type="GO" id="GO:0022627">
    <property type="term" value="C:cytosolic small ribosomal subunit"/>
    <property type="evidence" value="ECO:0007669"/>
    <property type="project" value="TreeGrafter"/>
</dbReference>
<dbReference type="GO" id="GO:0003735">
    <property type="term" value="F:structural constituent of ribosome"/>
    <property type="evidence" value="ECO:0007669"/>
    <property type="project" value="InterPro"/>
</dbReference>
<dbReference type="GO" id="GO:0006412">
    <property type="term" value="P:translation"/>
    <property type="evidence" value="ECO:0007669"/>
    <property type="project" value="UniProtKB-UniRule"/>
</dbReference>
<dbReference type="CDD" id="cd01425">
    <property type="entry name" value="RPS2"/>
    <property type="match status" value="1"/>
</dbReference>
<dbReference type="Gene3D" id="3.40.50.10490">
    <property type="entry name" value="Glucose-6-phosphate isomerase like protein, domain 1"/>
    <property type="match status" value="1"/>
</dbReference>
<dbReference type="Gene3D" id="1.10.287.610">
    <property type="entry name" value="Helix hairpin bin"/>
    <property type="match status" value="1"/>
</dbReference>
<dbReference type="HAMAP" id="MF_00291_B">
    <property type="entry name" value="Ribosomal_uS2_B"/>
    <property type="match status" value="1"/>
</dbReference>
<dbReference type="InterPro" id="IPR001865">
    <property type="entry name" value="Ribosomal_uS2"/>
</dbReference>
<dbReference type="InterPro" id="IPR005706">
    <property type="entry name" value="Ribosomal_uS2_bac/mit/plastid"/>
</dbReference>
<dbReference type="InterPro" id="IPR018130">
    <property type="entry name" value="Ribosomal_uS2_CS"/>
</dbReference>
<dbReference type="InterPro" id="IPR023591">
    <property type="entry name" value="Ribosomal_uS2_flav_dom_sf"/>
</dbReference>
<dbReference type="NCBIfam" id="TIGR01011">
    <property type="entry name" value="rpsB_bact"/>
    <property type="match status" value="1"/>
</dbReference>
<dbReference type="PANTHER" id="PTHR12534">
    <property type="entry name" value="30S RIBOSOMAL PROTEIN S2 PROKARYOTIC AND ORGANELLAR"/>
    <property type="match status" value="1"/>
</dbReference>
<dbReference type="PANTHER" id="PTHR12534:SF0">
    <property type="entry name" value="SMALL RIBOSOMAL SUBUNIT PROTEIN US2M"/>
    <property type="match status" value="1"/>
</dbReference>
<dbReference type="Pfam" id="PF00318">
    <property type="entry name" value="Ribosomal_S2"/>
    <property type="match status" value="1"/>
</dbReference>
<dbReference type="PRINTS" id="PR00395">
    <property type="entry name" value="RIBOSOMALS2"/>
</dbReference>
<dbReference type="SUPFAM" id="SSF52313">
    <property type="entry name" value="Ribosomal protein S2"/>
    <property type="match status" value="1"/>
</dbReference>
<dbReference type="PROSITE" id="PS00962">
    <property type="entry name" value="RIBOSOMAL_S2_1"/>
    <property type="match status" value="1"/>
</dbReference>
<dbReference type="PROSITE" id="PS00963">
    <property type="entry name" value="RIBOSOMAL_S2_2"/>
    <property type="match status" value="1"/>
</dbReference>
<proteinExistence type="inferred from homology"/>
<name>RS2_CHLCV</name>